<feature type="chain" id="PRO_1000120649" description="Small ribosomal subunit protein bS21">
    <location>
        <begin position="1"/>
        <end position="71"/>
    </location>
</feature>
<feature type="region of interest" description="Disordered" evidence="2">
    <location>
        <begin position="43"/>
        <end position="71"/>
    </location>
</feature>
<feature type="compositionally biased region" description="Basic residues" evidence="2">
    <location>
        <begin position="46"/>
        <end position="59"/>
    </location>
</feature>
<feature type="compositionally biased region" description="Basic and acidic residues" evidence="2">
    <location>
        <begin position="60"/>
        <end position="71"/>
    </location>
</feature>
<proteinExistence type="inferred from homology"/>
<keyword id="KW-1185">Reference proteome</keyword>
<keyword id="KW-0687">Ribonucleoprotein</keyword>
<keyword id="KW-0689">Ribosomal protein</keyword>
<dbReference type="EMBL" id="AM942759">
    <property type="protein sequence ID" value="CAR44682.1"/>
    <property type="molecule type" value="Genomic_DNA"/>
</dbReference>
<dbReference type="RefSeq" id="WP_001144069.1">
    <property type="nucleotide sequence ID" value="NC_010554.1"/>
</dbReference>
<dbReference type="SMR" id="B4EW58"/>
<dbReference type="EnsemblBacteria" id="CAR44682">
    <property type="protein sequence ID" value="CAR44682"/>
    <property type="gene ID" value="PMI2370"/>
</dbReference>
<dbReference type="GeneID" id="98390195"/>
<dbReference type="KEGG" id="pmr:PMI2370"/>
<dbReference type="eggNOG" id="COG0828">
    <property type="taxonomic scope" value="Bacteria"/>
</dbReference>
<dbReference type="HOGENOM" id="CLU_159258_1_0_6"/>
<dbReference type="Proteomes" id="UP000008319">
    <property type="component" value="Chromosome"/>
</dbReference>
<dbReference type="GO" id="GO:1990904">
    <property type="term" value="C:ribonucleoprotein complex"/>
    <property type="evidence" value="ECO:0007669"/>
    <property type="project" value="UniProtKB-KW"/>
</dbReference>
<dbReference type="GO" id="GO:0005840">
    <property type="term" value="C:ribosome"/>
    <property type="evidence" value="ECO:0007669"/>
    <property type="project" value="UniProtKB-KW"/>
</dbReference>
<dbReference type="GO" id="GO:0003735">
    <property type="term" value="F:structural constituent of ribosome"/>
    <property type="evidence" value="ECO:0007669"/>
    <property type="project" value="InterPro"/>
</dbReference>
<dbReference type="GO" id="GO:0006412">
    <property type="term" value="P:translation"/>
    <property type="evidence" value="ECO:0007669"/>
    <property type="project" value="UniProtKB-UniRule"/>
</dbReference>
<dbReference type="FunFam" id="1.20.5.1150:FF:000001">
    <property type="entry name" value="30S ribosomal protein S21"/>
    <property type="match status" value="1"/>
</dbReference>
<dbReference type="Gene3D" id="1.20.5.1150">
    <property type="entry name" value="Ribosomal protein S8"/>
    <property type="match status" value="1"/>
</dbReference>
<dbReference type="HAMAP" id="MF_00358">
    <property type="entry name" value="Ribosomal_bS21"/>
    <property type="match status" value="1"/>
</dbReference>
<dbReference type="InterPro" id="IPR001911">
    <property type="entry name" value="Ribosomal_bS21"/>
</dbReference>
<dbReference type="InterPro" id="IPR018278">
    <property type="entry name" value="Ribosomal_bS21_CS"/>
</dbReference>
<dbReference type="InterPro" id="IPR038380">
    <property type="entry name" value="Ribosomal_bS21_sf"/>
</dbReference>
<dbReference type="NCBIfam" id="TIGR00030">
    <property type="entry name" value="S21p"/>
    <property type="match status" value="1"/>
</dbReference>
<dbReference type="PANTHER" id="PTHR21109">
    <property type="entry name" value="MITOCHONDRIAL 28S RIBOSOMAL PROTEIN S21"/>
    <property type="match status" value="1"/>
</dbReference>
<dbReference type="PANTHER" id="PTHR21109:SF22">
    <property type="entry name" value="SMALL RIBOSOMAL SUBUNIT PROTEIN BS21"/>
    <property type="match status" value="1"/>
</dbReference>
<dbReference type="Pfam" id="PF01165">
    <property type="entry name" value="Ribosomal_S21"/>
    <property type="match status" value="1"/>
</dbReference>
<dbReference type="PRINTS" id="PR00976">
    <property type="entry name" value="RIBOSOMALS21"/>
</dbReference>
<dbReference type="PROSITE" id="PS01181">
    <property type="entry name" value="RIBOSOMAL_S21"/>
    <property type="match status" value="1"/>
</dbReference>
<sequence length="71" mass="8500">MPVIKVRENEPFDVALRRFKRSCEKAGVLAEVRRREFYEKPTTERKRAKASAVKRHAKKLARENARRTRLY</sequence>
<protein>
    <recommendedName>
        <fullName evidence="1">Small ribosomal subunit protein bS21</fullName>
    </recommendedName>
    <alternativeName>
        <fullName evidence="3">30S ribosomal protein S21</fullName>
    </alternativeName>
</protein>
<reference key="1">
    <citation type="journal article" date="2008" name="J. Bacteriol.">
        <title>Complete genome sequence of uropathogenic Proteus mirabilis, a master of both adherence and motility.</title>
        <authorList>
            <person name="Pearson M.M."/>
            <person name="Sebaihia M."/>
            <person name="Churcher C."/>
            <person name="Quail M.A."/>
            <person name="Seshasayee A.S."/>
            <person name="Luscombe N.M."/>
            <person name="Abdellah Z."/>
            <person name="Arrosmith C."/>
            <person name="Atkin B."/>
            <person name="Chillingworth T."/>
            <person name="Hauser H."/>
            <person name="Jagels K."/>
            <person name="Moule S."/>
            <person name="Mungall K."/>
            <person name="Norbertczak H."/>
            <person name="Rabbinowitsch E."/>
            <person name="Walker D."/>
            <person name="Whithead S."/>
            <person name="Thomson N.R."/>
            <person name="Rather P.N."/>
            <person name="Parkhill J."/>
            <person name="Mobley H.L.T."/>
        </authorList>
    </citation>
    <scope>NUCLEOTIDE SEQUENCE [LARGE SCALE GENOMIC DNA]</scope>
    <source>
        <strain>HI4320</strain>
    </source>
</reference>
<comment type="similarity">
    <text evidence="1">Belongs to the bacterial ribosomal protein bS21 family.</text>
</comment>
<accession>B4EW58</accession>
<name>RS21_PROMH</name>
<evidence type="ECO:0000255" key="1">
    <source>
        <dbReference type="HAMAP-Rule" id="MF_00358"/>
    </source>
</evidence>
<evidence type="ECO:0000256" key="2">
    <source>
        <dbReference type="SAM" id="MobiDB-lite"/>
    </source>
</evidence>
<evidence type="ECO:0000305" key="3"/>
<gene>
    <name evidence="1" type="primary">rpsU</name>
    <name type="ordered locus">PMI2370</name>
</gene>
<organism>
    <name type="scientific">Proteus mirabilis (strain HI4320)</name>
    <dbReference type="NCBI Taxonomy" id="529507"/>
    <lineage>
        <taxon>Bacteria</taxon>
        <taxon>Pseudomonadati</taxon>
        <taxon>Pseudomonadota</taxon>
        <taxon>Gammaproteobacteria</taxon>
        <taxon>Enterobacterales</taxon>
        <taxon>Morganellaceae</taxon>
        <taxon>Proteus</taxon>
    </lineage>
</organism>